<name>RIMP_TRIL1</name>
<organism>
    <name type="scientific">Trichlorobacter lovleyi (strain ATCC BAA-1151 / DSM 17278 / SZ)</name>
    <name type="common">Geobacter lovleyi</name>
    <dbReference type="NCBI Taxonomy" id="398767"/>
    <lineage>
        <taxon>Bacteria</taxon>
        <taxon>Pseudomonadati</taxon>
        <taxon>Thermodesulfobacteriota</taxon>
        <taxon>Desulfuromonadia</taxon>
        <taxon>Geobacterales</taxon>
        <taxon>Geobacteraceae</taxon>
        <taxon>Trichlorobacter</taxon>
    </lineage>
</organism>
<feature type="chain" id="PRO_1000136768" description="Ribosome maturation factor RimP">
    <location>
        <begin position="1"/>
        <end position="159"/>
    </location>
</feature>
<dbReference type="EMBL" id="CP001089">
    <property type="protein sequence ID" value="ACD95382.1"/>
    <property type="molecule type" value="Genomic_DNA"/>
</dbReference>
<dbReference type="RefSeq" id="WP_012469724.1">
    <property type="nucleotide sequence ID" value="NC_010814.1"/>
</dbReference>
<dbReference type="SMR" id="B3EAE4"/>
<dbReference type="STRING" id="398767.Glov_1666"/>
<dbReference type="KEGG" id="glo:Glov_1666"/>
<dbReference type="eggNOG" id="COG0779">
    <property type="taxonomic scope" value="Bacteria"/>
</dbReference>
<dbReference type="HOGENOM" id="CLU_070525_2_2_7"/>
<dbReference type="OrthoDB" id="9805006at2"/>
<dbReference type="Proteomes" id="UP000002420">
    <property type="component" value="Chromosome"/>
</dbReference>
<dbReference type="GO" id="GO:0005829">
    <property type="term" value="C:cytosol"/>
    <property type="evidence" value="ECO:0007669"/>
    <property type="project" value="TreeGrafter"/>
</dbReference>
<dbReference type="GO" id="GO:0000028">
    <property type="term" value="P:ribosomal small subunit assembly"/>
    <property type="evidence" value="ECO:0007669"/>
    <property type="project" value="TreeGrafter"/>
</dbReference>
<dbReference type="GO" id="GO:0006412">
    <property type="term" value="P:translation"/>
    <property type="evidence" value="ECO:0007669"/>
    <property type="project" value="TreeGrafter"/>
</dbReference>
<dbReference type="CDD" id="cd01734">
    <property type="entry name" value="YlxS_C"/>
    <property type="match status" value="1"/>
</dbReference>
<dbReference type="FunFam" id="3.30.300.70:FF:000001">
    <property type="entry name" value="Ribosome maturation factor RimP"/>
    <property type="match status" value="1"/>
</dbReference>
<dbReference type="Gene3D" id="2.30.30.180">
    <property type="entry name" value="Ribosome maturation factor RimP, C-terminal domain"/>
    <property type="match status" value="1"/>
</dbReference>
<dbReference type="Gene3D" id="3.30.300.70">
    <property type="entry name" value="RimP-like superfamily, N-terminal"/>
    <property type="match status" value="1"/>
</dbReference>
<dbReference type="HAMAP" id="MF_01077">
    <property type="entry name" value="RimP"/>
    <property type="match status" value="1"/>
</dbReference>
<dbReference type="InterPro" id="IPR003728">
    <property type="entry name" value="Ribosome_maturation_RimP"/>
</dbReference>
<dbReference type="InterPro" id="IPR028998">
    <property type="entry name" value="RimP_C"/>
</dbReference>
<dbReference type="InterPro" id="IPR036847">
    <property type="entry name" value="RimP_C_sf"/>
</dbReference>
<dbReference type="InterPro" id="IPR028989">
    <property type="entry name" value="RimP_N"/>
</dbReference>
<dbReference type="InterPro" id="IPR035956">
    <property type="entry name" value="RimP_N_sf"/>
</dbReference>
<dbReference type="NCBIfam" id="NF011241">
    <property type="entry name" value="PRK14647.1"/>
    <property type="match status" value="1"/>
</dbReference>
<dbReference type="PANTHER" id="PTHR33867">
    <property type="entry name" value="RIBOSOME MATURATION FACTOR RIMP"/>
    <property type="match status" value="1"/>
</dbReference>
<dbReference type="PANTHER" id="PTHR33867:SF1">
    <property type="entry name" value="RIBOSOME MATURATION FACTOR RIMP"/>
    <property type="match status" value="1"/>
</dbReference>
<dbReference type="Pfam" id="PF17384">
    <property type="entry name" value="DUF150_C"/>
    <property type="match status" value="1"/>
</dbReference>
<dbReference type="Pfam" id="PF02576">
    <property type="entry name" value="RimP_N"/>
    <property type="match status" value="1"/>
</dbReference>
<dbReference type="SUPFAM" id="SSF74942">
    <property type="entry name" value="YhbC-like, C-terminal domain"/>
    <property type="match status" value="1"/>
</dbReference>
<dbReference type="SUPFAM" id="SSF75420">
    <property type="entry name" value="YhbC-like, N-terminal domain"/>
    <property type="match status" value="1"/>
</dbReference>
<keyword id="KW-0963">Cytoplasm</keyword>
<keyword id="KW-1185">Reference proteome</keyword>
<keyword id="KW-0690">Ribosome biogenesis</keyword>
<reference key="1">
    <citation type="submission" date="2008-05" db="EMBL/GenBank/DDBJ databases">
        <title>Complete sequence of chromosome of Geobacter lovleyi SZ.</title>
        <authorList>
            <consortium name="US DOE Joint Genome Institute"/>
            <person name="Lucas S."/>
            <person name="Copeland A."/>
            <person name="Lapidus A."/>
            <person name="Glavina del Rio T."/>
            <person name="Dalin E."/>
            <person name="Tice H."/>
            <person name="Bruce D."/>
            <person name="Goodwin L."/>
            <person name="Pitluck S."/>
            <person name="Chertkov O."/>
            <person name="Meincke L."/>
            <person name="Brettin T."/>
            <person name="Detter J.C."/>
            <person name="Han C."/>
            <person name="Tapia R."/>
            <person name="Kuske C.R."/>
            <person name="Schmutz J."/>
            <person name="Larimer F."/>
            <person name="Land M."/>
            <person name="Hauser L."/>
            <person name="Kyrpides N."/>
            <person name="Mikhailova N."/>
            <person name="Sung Y."/>
            <person name="Fletcher K.E."/>
            <person name="Ritalahti K.M."/>
            <person name="Loeffler F.E."/>
            <person name="Richardson P."/>
        </authorList>
    </citation>
    <scope>NUCLEOTIDE SEQUENCE [LARGE SCALE GENOMIC DNA]</scope>
    <source>
        <strain>ATCC BAA-1151 / DSM 17278 / SZ</strain>
    </source>
</reference>
<sequence length="159" mass="18081">MSATDPIQRVETLLQPILDAMGLELVELEFKKVGRSYLLRVFIDKPDGVNLDDCAEVSRELSVQLDVEDCIASRYTLEVSSPGLDRPLKKEQDFIRYQGRLAVVKTTELLKDEKGSPRKTFLGFLEGVEDGEVMIRLKEGPQARIPWDKIAKAHLEFEF</sequence>
<proteinExistence type="inferred from homology"/>
<accession>B3EAE4</accession>
<gene>
    <name evidence="1" type="primary">rimP</name>
    <name type="ordered locus">Glov_1666</name>
</gene>
<comment type="function">
    <text evidence="1">Required for maturation of 30S ribosomal subunits.</text>
</comment>
<comment type="subcellular location">
    <subcellularLocation>
        <location evidence="1">Cytoplasm</location>
    </subcellularLocation>
</comment>
<comment type="similarity">
    <text evidence="1">Belongs to the RimP family.</text>
</comment>
<evidence type="ECO:0000255" key="1">
    <source>
        <dbReference type="HAMAP-Rule" id="MF_01077"/>
    </source>
</evidence>
<protein>
    <recommendedName>
        <fullName evidence="1">Ribosome maturation factor RimP</fullName>
    </recommendedName>
</protein>